<sequence length="623" mass="68731">MPAFYGGKLTTFEDDEKESEYGYVRKVSGPVVVADGMAGAAMYELVRVGHDNLIGEIIRLEGDSATIQVYEETAGLTVNDPVLRTHKPLSVELGPGILGNIFDGIQRPLKTIAKRSGDVYIPRGVSVPALDKDCLWEFQPKDFVEGDTITGGDLYATVFENSLMQHHVALPPDAMGKITYLAPAGQYSLKDTVLELEFQGVKKSFTMLQTWPVRTPRPVASKLAADTPLLTGQRVLDALFPSVLGGTCAIPGAFGCGKTVISQALSKYSNSDAVVYVGCGERGNEMAEVLMDFPQLTMTLPDGREESVMKRTTLVANTSNMPVAAREASIYTGITIAEYFRDMGYNVSMMADSTSRWAEALREISGRLAEMPADSGYPAYLAARLASFYERAGKVKCLGGPERNGSVTIVGAVSPPGGDFSDPVTSATLSIVQVFWGLDKKLAQRKHFPSVNWLISYSKYSTALESFYEKFDSDFIDIRTKAREVLQREDDLNEIVQLVGKDALAEGDKITLETAKLLREDYLAQNAFTPYDKFCPFYKSVWMMRNIIHFYNLANQAVERGAGMDGQKISYSLIKHRLGDLFYRLVSQKFEDPAEGEDVLVGKFKKLHDDLTSGFRNLEDETR</sequence>
<keyword id="KW-0067">ATP-binding</keyword>
<keyword id="KW-0375">Hydrogen ion transport</keyword>
<keyword id="KW-0406">Ion transport</keyword>
<keyword id="KW-0547">Nucleotide-binding</keyword>
<keyword id="KW-1278">Translocase</keyword>
<keyword id="KW-0813">Transport</keyword>
<comment type="function">
    <text>Catalytic subunit of the peripheral V1 complex of vacuolar ATPase. V-ATPase vacuolar ATPase is responsible for acidifying a variety of intracellular compartments in eukaryotic cells.</text>
</comment>
<comment type="catalytic activity">
    <reaction>
        <text>ATP + H2O + 4 H(+)(in) = ADP + phosphate + 5 H(+)(out)</text>
        <dbReference type="Rhea" id="RHEA:57720"/>
        <dbReference type="ChEBI" id="CHEBI:15377"/>
        <dbReference type="ChEBI" id="CHEBI:15378"/>
        <dbReference type="ChEBI" id="CHEBI:30616"/>
        <dbReference type="ChEBI" id="CHEBI:43474"/>
        <dbReference type="ChEBI" id="CHEBI:456216"/>
        <dbReference type="EC" id="7.1.2.2"/>
    </reaction>
</comment>
<comment type="subunit">
    <text>V-ATPase is a heteromultimeric enzyme composed of a peripheral catalytic V1 complex (main components: subunits A, B, C, D, E, and F) attached to an integral membrane V0 proton pore complex (main component: the proteolipid protein).</text>
</comment>
<comment type="similarity">
    <text evidence="2">Belongs to the ATPase alpha/beta chains family.</text>
</comment>
<reference key="1">
    <citation type="journal article" date="1995" name="Plant Mol. Biol.">
        <title>Characterization of a low-temperature-induced cDNA from winter Brassica napus encoding the 70 kDa subunit of tonoplast ATPase.</title>
        <authorList>
            <person name="Orr W."/>
            <person name="White T.C."/>
            <person name="Iu B."/>
            <person name="Robert L."/>
            <person name="Singh J."/>
        </authorList>
    </citation>
    <scope>NUCLEOTIDE SEQUENCE [MRNA]</scope>
    <source>
        <strain>cv. Jet neuf</strain>
        <tissue>Leaf</tissue>
    </source>
</reference>
<organism>
    <name type="scientific">Brassica napus</name>
    <name type="common">Rape</name>
    <dbReference type="NCBI Taxonomy" id="3708"/>
    <lineage>
        <taxon>Eukaryota</taxon>
        <taxon>Viridiplantae</taxon>
        <taxon>Streptophyta</taxon>
        <taxon>Embryophyta</taxon>
        <taxon>Tracheophyta</taxon>
        <taxon>Spermatophyta</taxon>
        <taxon>Magnoliopsida</taxon>
        <taxon>eudicotyledons</taxon>
        <taxon>Gunneridae</taxon>
        <taxon>Pentapetalae</taxon>
        <taxon>rosids</taxon>
        <taxon>malvids</taxon>
        <taxon>Brassicales</taxon>
        <taxon>Brassicaceae</taxon>
        <taxon>Brassiceae</taxon>
        <taxon>Brassica</taxon>
    </lineage>
</organism>
<proteinExistence type="evidence at transcript level"/>
<evidence type="ECO:0000255" key="1"/>
<evidence type="ECO:0000305" key="2"/>
<dbReference type="EC" id="7.1.2.2"/>
<dbReference type="EMBL" id="U15604">
    <property type="protein sequence ID" value="AAA82881.1"/>
    <property type="molecule type" value="mRNA"/>
</dbReference>
<dbReference type="PIR" id="S57790">
    <property type="entry name" value="S57790"/>
</dbReference>
<dbReference type="SMR" id="Q39291"/>
<dbReference type="GO" id="GO:0033180">
    <property type="term" value="C:proton-transporting V-type ATPase, V1 domain"/>
    <property type="evidence" value="ECO:0007669"/>
    <property type="project" value="InterPro"/>
</dbReference>
<dbReference type="GO" id="GO:0005524">
    <property type="term" value="F:ATP binding"/>
    <property type="evidence" value="ECO:0007669"/>
    <property type="project" value="UniProtKB-KW"/>
</dbReference>
<dbReference type="GO" id="GO:0016887">
    <property type="term" value="F:ATP hydrolysis activity"/>
    <property type="evidence" value="ECO:0007669"/>
    <property type="project" value="InterPro"/>
</dbReference>
<dbReference type="GO" id="GO:0046961">
    <property type="term" value="F:proton-transporting ATPase activity, rotational mechanism"/>
    <property type="evidence" value="ECO:0007669"/>
    <property type="project" value="InterPro"/>
</dbReference>
<dbReference type="GO" id="GO:0046034">
    <property type="term" value="P:ATP metabolic process"/>
    <property type="evidence" value="ECO:0007669"/>
    <property type="project" value="InterPro"/>
</dbReference>
<dbReference type="CDD" id="cd18111">
    <property type="entry name" value="ATP-synt_V_A-type_alpha_C"/>
    <property type="match status" value="1"/>
</dbReference>
<dbReference type="CDD" id="cd18119">
    <property type="entry name" value="ATP-synt_V_A-type_alpha_N"/>
    <property type="match status" value="1"/>
</dbReference>
<dbReference type="CDD" id="cd01134">
    <property type="entry name" value="V_A-ATPase_A"/>
    <property type="match status" value="1"/>
</dbReference>
<dbReference type="FunFam" id="1.10.1140.10:FF:000002">
    <property type="entry name" value="V-type proton ATPase catalytic subunit A"/>
    <property type="match status" value="1"/>
</dbReference>
<dbReference type="FunFam" id="2.40.30.20:FF:000002">
    <property type="entry name" value="V-type proton ATPase catalytic subunit A"/>
    <property type="match status" value="1"/>
</dbReference>
<dbReference type="FunFam" id="2.40.50.100:FF:000008">
    <property type="entry name" value="V-type proton ATPase catalytic subunit A"/>
    <property type="match status" value="1"/>
</dbReference>
<dbReference type="FunFam" id="3.40.50.300:FF:000052">
    <property type="entry name" value="V-type proton ATPase catalytic subunit A"/>
    <property type="match status" value="1"/>
</dbReference>
<dbReference type="Gene3D" id="2.40.30.20">
    <property type="match status" value="1"/>
</dbReference>
<dbReference type="Gene3D" id="2.40.50.100">
    <property type="match status" value="1"/>
</dbReference>
<dbReference type="Gene3D" id="1.10.1140.10">
    <property type="entry name" value="Bovine Mitochondrial F1-atpase, Atp Synthase Beta Chain, Chain D, domain 3"/>
    <property type="match status" value="1"/>
</dbReference>
<dbReference type="Gene3D" id="3.40.50.300">
    <property type="entry name" value="P-loop containing nucleotide triphosphate hydrolases"/>
    <property type="match status" value="1"/>
</dbReference>
<dbReference type="HAMAP" id="MF_00309">
    <property type="entry name" value="ATP_synth_A_arch"/>
    <property type="match status" value="1"/>
</dbReference>
<dbReference type="InterPro" id="IPR055190">
    <property type="entry name" value="ATP-synt_VA_C"/>
</dbReference>
<dbReference type="InterPro" id="IPR031686">
    <property type="entry name" value="ATP-synth_a_Xtn"/>
</dbReference>
<dbReference type="InterPro" id="IPR023366">
    <property type="entry name" value="ATP_synth_asu-like_sf"/>
</dbReference>
<dbReference type="InterPro" id="IPR020003">
    <property type="entry name" value="ATPase_a/bsu_AS"/>
</dbReference>
<dbReference type="InterPro" id="IPR004100">
    <property type="entry name" value="ATPase_F1/V1/A1_a/bsu_N"/>
</dbReference>
<dbReference type="InterPro" id="IPR036121">
    <property type="entry name" value="ATPase_F1/V1/A1_a/bsu_N_sf"/>
</dbReference>
<dbReference type="InterPro" id="IPR000194">
    <property type="entry name" value="ATPase_F1/V1/A1_a/bsu_nucl-bd"/>
</dbReference>
<dbReference type="InterPro" id="IPR024034">
    <property type="entry name" value="ATPase_F1/V1_b/a_C"/>
</dbReference>
<dbReference type="InterPro" id="IPR005725">
    <property type="entry name" value="ATPase_V1-cplx_asu"/>
</dbReference>
<dbReference type="InterPro" id="IPR027417">
    <property type="entry name" value="P-loop_NTPase"/>
</dbReference>
<dbReference type="InterPro" id="IPR022878">
    <property type="entry name" value="V-ATPase_asu"/>
</dbReference>
<dbReference type="NCBIfam" id="NF003220">
    <property type="entry name" value="PRK04192.1"/>
    <property type="match status" value="1"/>
</dbReference>
<dbReference type="NCBIfam" id="TIGR01042">
    <property type="entry name" value="V-ATPase_V1_A"/>
    <property type="match status" value="1"/>
</dbReference>
<dbReference type="PANTHER" id="PTHR43607:SF1">
    <property type="entry name" value="H(+)-TRANSPORTING TWO-SECTOR ATPASE"/>
    <property type="match status" value="1"/>
</dbReference>
<dbReference type="PANTHER" id="PTHR43607">
    <property type="entry name" value="V-TYPE PROTON ATPASE CATALYTIC SUBUNIT A"/>
    <property type="match status" value="1"/>
</dbReference>
<dbReference type="Pfam" id="PF00006">
    <property type="entry name" value="ATP-synt_ab"/>
    <property type="match status" value="1"/>
</dbReference>
<dbReference type="Pfam" id="PF02874">
    <property type="entry name" value="ATP-synt_ab_N"/>
    <property type="match status" value="1"/>
</dbReference>
<dbReference type="Pfam" id="PF16886">
    <property type="entry name" value="ATP-synt_ab_Xtn"/>
    <property type="match status" value="1"/>
</dbReference>
<dbReference type="Pfam" id="PF22919">
    <property type="entry name" value="ATP-synt_VA_C"/>
    <property type="match status" value="1"/>
</dbReference>
<dbReference type="SUPFAM" id="SSF47917">
    <property type="entry name" value="C-terminal domain of alpha and beta subunits of F1 ATP synthase"/>
    <property type="match status" value="1"/>
</dbReference>
<dbReference type="SUPFAM" id="SSF50615">
    <property type="entry name" value="N-terminal domain of alpha and beta subunits of F1 ATP synthase"/>
    <property type="match status" value="1"/>
</dbReference>
<dbReference type="SUPFAM" id="SSF52540">
    <property type="entry name" value="P-loop containing nucleoside triphosphate hydrolases"/>
    <property type="match status" value="1"/>
</dbReference>
<dbReference type="PROSITE" id="PS00152">
    <property type="entry name" value="ATPASE_ALPHA_BETA"/>
    <property type="match status" value="1"/>
</dbReference>
<protein>
    <recommendedName>
        <fullName>V-type proton ATPase catalytic subunit A</fullName>
        <shortName>V-ATPase subunit A</shortName>
        <ecNumber>7.1.2.2</ecNumber>
    </recommendedName>
    <alternativeName>
        <fullName>BN59</fullName>
    </alternativeName>
    <alternativeName>
        <fullName>Tonoplast ATPase 70 kDa subunit</fullName>
    </alternativeName>
    <alternativeName>
        <fullName>V-ATPase 69 kDa subunit</fullName>
    </alternativeName>
    <alternativeName>
        <fullName>Vacuolar proton pump subunit alpha</fullName>
    </alternativeName>
</protein>
<name>VATA_BRANA</name>
<feature type="chain" id="PRO_0000144576" description="V-type proton ATPase catalytic subunit A">
    <location>
        <begin position="1"/>
        <end position="623"/>
    </location>
</feature>
<feature type="binding site" evidence="1">
    <location>
        <begin position="252"/>
        <end position="259"/>
    </location>
    <ligand>
        <name>ATP</name>
        <dbReference type="ChEBI" id="CHEBI:30616"/>
    </ligand>
</feature>
<accession>Q39291</accession>